<proteinExistence type="inferred from homology"/>
<comment type="function">
    <text evidence="1">Catalyzes the stereoinversion of LL-2,6-diaminopimelate (L,L-DAP) to meso-diaminopimelate (meso-DAP), a precursor of L-lysine and an essential component of the bacterial peptidoglycan.</text>
</comment>
<comment type="catalytic activity">
    <reaction evidence="1">
        <text>(2S,6S)-2,6-diaminopimelate = meso-2,6-diaminopimelate</text>
        <dbReference type="Rhea" id="RHEA:15393"/>
        <dbReference type="ChEBI" id="CHEBI:57609"/>
        <dbReference type="ChEBI" id="CHEBI:57791"/>
        <dbReference type="EC" id="5.1.1.7"/>
    </reaction>
</comment>
<comment type="pathway">
    <text evidence="1">Amino-acid biosynthesis; L-lysine biosynthesis via DAP pathway; DL-2,6-diaminopimelate from LL-2,6-diaminopimelate: step 1/1.</text>
</comment>
<comment type="subunit">
    <text evidence="1">Homodimer.</text>
</comment>
<comment type="subcellular location">
    <subcellularLocation>
        <location evidence="1">Cytoplasm</location>
    </subcellularLocation>
</comment>
<comment type="similarity">
    <text evidence="1">Belongs to the diaminopimelate epimerase family.</text>
</comment>
<name>DAPF_BURMS</name>
<protein>
    <recommendedName>
        <fullName evidence="1">Diaminopimelate epimerase</fullName>
        <shortName evidence="1">DAP epimerase</shortName>
        <ecNumber evidence="1">5.1.1.7</ecNumber>
    </recommendedName>
    <alternativeName>
        <fullName evidence="1">PLP-independent amino acid racemase</fullName>
    </alternativeName>
</protein>
<organism>
    <name type="scientific">Burkholderia mallei (strain SAVP1)</name>
    <dbReference type="NCBI Taxonomy" id="320388"/>
    <lineage>
        <taxon>Bacteria</taxon>
        <taxon>Pseudomonadati</taxon>
        <taxon>Pseudomonadota</taxon>
        <taxon>Betaproteobacteria</taxon>
        <taxon>Burkholderiales</taxon>
        <taxon>Burkholderiaceae</taxon>
        <taxon>Burkholderia</taxon>
        <taxon>pseudomallei group</taxon>
    </lineage>
</organism>
<reference key="1">
    <citation type="journal article" date="2010" name="Genome Biol. Evol.">
        <title>Continuing evolution of Burkholderia mallei through genome reduction and large-scale rearrangements.</title>
        <authorList>
            <person name="Losada L."/>
            <person name="Ronning C.M."/>
            <person name="DeShazer D."/>
            <person name="Woods D."/>
            <person name="Fedorova N."/>
            <person name="Kim H.S."/>
            <person name="Shabalina S.A."/>
            <person name="Pearson T.R."/>
            <person name="Brinkac L."/>
            <person name="Tan P."/>
            <person name="Nandi T."/>
            <person name="Crabtree J."/>
            <person name="Badger J."/>
            <person name="Beckstrom-Sternberg S."/>
            <person name="Saqib M."/>
            <person name="Schutzer S.E."/>
            <person name="Keim P."/>
            <person name="Nierman W.C."/>
        </authorList>
    </citation>
    <scope>NUCLEOTIDE SEQUENCE [LARGE SCALE GENOMIC DNA]</scope>
    <source>
        <strain>SAVP1</strain>
    </source>
</reference>
<sequence length="289" mass="30899">MKLSFTKMHGAGNDFVVLDGYTRALPPLTGAQVRALADRHFGIGADQLLLVEKPTVDGADFKYRIFNCDGGEVEHCGNGARCFVKFVRDHGLTGKASVRVEVKHGVITLTMQDNGEVVVDMGAPVFEPARVPFDASGLDGRREGADTLWPLPVNGVTRWISVVSMGNPHAVQIVDDAEAFAVRVDGPAIERDPRFPQRVNAGFMQIVSRHEVNLRVYERGAGETLACGTGACAAVAAGIRRGRLDSPVTVHTHGGTLTISWNGACDERAPLMMAGPATTVFEGVIELPA</sequence>
<gene>
    <name evidence="1" type="primary">dapF</name>
    <name type="ordered locus">BMASAVP1_A2922</name>
</gene>
<dbReference type="EC" id="5.1.1.7" evidence="1"/>
<dbReference type="EMBL" id="CP000526">
    <property type="protein sequence ID" value="ABM50272.1"/>
    <property type="molecule type" value="Genomic_DNA"/>
</dbReference>
<dbReference type="RefSeq" id="WP_004199067.1">
    <property type="nucleotide sequence ID" value="NC_008785.1"/>
</dbReference>
<dbReference type="SMR" id="A1V7L3"/>
<dbReference type="GeneID" id="93058719"/>
<dbReference type="KEGG" id="bmv:BMASAVP1_A2922"/>
<dbReference type="HOGENOM" id="CLU_053306_1_1_4"/>
<dbReference type="UniPathway" id="UPA00034">
    <property type="reaction ID" value="UER00025"/>
</dbReference>
<dbReference type="GO" id="GO:0005829">
    <property type="term" value="C:cytosol"/>
    <property type="evidence" value="ECO:0007669"/>
    <property type="project" value="TreeGrafter"/>
</dbReference>
<dbReference type="GO" id="GO:0008837">
    <property type="term" value="F:diaminopimelate epimerase activity"/>
    <property type="evidence" value="ECO:0007669"/>
    <property type="project" value="UniProtKB-UniRule"/>
</dbReference>
<dbReference type="GO" id="GO:0009089">
    <property type="term" value="P:lysine biosynthetic process via diaminopimelate"/>
    <property type="evidence" value="ECO:0007669"/>
    <property type="project" value="UniProtKB-UniRule"/>
</dbReference>
<dbReference type="FunFam" id="3.10.310.10:FF:000001">
    <property type="entry name" value="Diaminopimelate epimerase"/>
    <property type="match status" value="1"/>
</dbReference>
<dbReference type="Gene3D" id="3.10.310.10">
    <property type="entry name" value="Diaminopimelate Epimerase, Chain A, domain 1"/>
    <property type="match status" value="2"/>
</dbReference>
<dbReference type="HAMAP" id="MF_00197">
    <property type="entry name" value="DAP_epimerase"/>
    <property type="match status" value="1"/>
</dbReference>
<dbReference type="InterPro" id="IPR018510">
    <property type="entry name" value="DAP_epimerase_AS"/>
</dbReference>
<dbReference type="InterPro" id="IPR001653">
    <property type="entry name" value="DAP_epimerase_DapF"/>
</dbReference>
<dbReference type="NCBIfam" id="TIGR00652">
    <property type="entry name" value="DapF"/>
    <property type="match status" value="1"/>
</dbReference>
<dbReference type="PANTHER" id="PTHR31689:SF0">
    <property type="entry name" value="DIAMINOPIMELATE EPIMERASE"/>
    <property type="match status" value="1"/>
</dbReference>
<dbReference type="PANTHER" id="PTHR31689">
    <property type="entry name" value="DIAMINOPIMELATE EPIMERASE, CHLOROPLASTIC"/>
    <property type="match status" value="1"/>
</dbReference>
<dbReference type="Pfam" id="PF01678">
    <property type="entry name" value="DAP_epimerase"/>
    <property type="match status" value="2"/>
</dbReference>
<dbReference type="SUPFAM" id="SSF54506">
    <property type="entry name" value="Diaminopimelate epimerase-like"/>
    <property type="match status" value="1"/>
</dbReference>
<dbReference type="PROSITE" id="PS01326">
    <property type="entry name" value="DAP_EPIMERASE"/>
    <property type="match status" value="1"/>
</dbReference>
<evidence type="ECO:0000255" key="1">
    <source>
        <dbReference type="HAMAP-Rule" id="MF_00197"/>
    </source>
</evidence>
<keyword id="KW-0028">Amino-acid biosynthesis</keyword>
<keyword id="KW-0963">Cytoplasm</keyword>
<keyword id="KW-0413">Isomerase</keyword>
<keyword id="KW-0457">Lysine biosynthesis</keyword>
<feature type="chain" id="PRO_1000011857" description="Diaminopimelate epimerase">
    <location>
        <begin position="1"/>
        <end position="289"/>
    </location>
</feature>
<feature type="active site" description="Proton donor" evidence="1">
    <location>
        <position position="76"/>
    </location>
</feature>
<feature type="active site" description="Proton acceptor" evidence="1">
    <location>
        <position position="227"/>
    </location>
</feature>
<feature type="binding site" evidence="1">
    <location>
        <position position="13"/>
    </location>
    <ligand>
        <name>substrate</name>
    </ligand>
</feature>
<feature type="binding site" evidence="1">
    <location>
        <position position="47"/>
    </location>
    <ligand>
        <name>substrate</name>
    </ligand>
</feature>
<feature type="binding site" evidence="1">
    <location>
        <position position="67"/>
    </location>
    <ligand>
        <name>substrate</name>
    </ligand>
</feature>
<feature type="binding site" evidence="1">
    <location>
        <begin position="77"/>
        <end position="78"/>
    </location>
    <ligand>
        <name>substrate</name>
    </ligand>
</feature>
<feature type="binding site" evidence="1">
    <location>
        <position position="167"/>
    </location>
    <ligand>
        <name>substrate</name>
    </ligand>
</feature>
<feature type="binding site" evidence="1">
    <location>
        <position position="200"/>
    </location>
    <ligand>
        <name>substrate</name>
    </ligand>
</feature>
<feature type="binding site" evidence="1">
    <location>
        <begin position="218"/>
        <end position="219"/>
    </location>
    <ligand>
        <name>substrate</name>
    </ligand>
</feature>
<feature type="binding site" evidence="1">
    <location>
        <begin position="228"/>
        <end position="229"/>
    </location>
    <ligand>
        <name>substrate</name>
    </ligand>
</feature>
<feature type="site" description="Could be important to modulate the pK values of the two catalytic cysteine residues" evidence="1">
    <location>
        <position position="169"/>
    </location>
</feature>
<feature type="site" description="Could be important to modulate the pK values of the two catalytic cysteine residues" evidence="1">
    <location>
        <position position="218"/>
    </location>
</feature>
<accession>A1V7L3</accession>